<keyword id="KW-0227">DNA damage</keyword>
<keyword id="KW-0234">DNA repair</keyword>
<keyword id="KW-0235">DNA replication</keyword>
<keyword id="KW-0255">Endonuclease</keyword>
<keyword id="KW-0269">Exonuclease</keyword>
<keyword id="KW-0378">Hydrolase</keyword>
<keyword id="KW-0460">Magnesium</keyword>
<keyword id="KW-0479">Metal-binding</keyword>
<keyword id="KW-0496">Mitochondrion</keyword>
<keyword id="KW-0540">Nuclease</keyword>
<keyword id="KW-0539">Nucleus</keyword>
<keyword id="KW-0597">Phosphoprotein</keyword>
<gene>
    <name evidence="2" type="primary">FEN1</name>
</gene>
<name>FEN1_PLAFA</name>
<proteinExistence type="evidence at transcript level"/>
<organism>
    <name type="scientific">Plasmodium falciparum</name>
    <dbReference type="NCBI Taxonomy" id="5833"/>
    <lineage>
        <taxon>Eukaryota</taxon>
        <taxon>Sar</taxon>
        <taxon>Alveolata</taxon>
        <taxon>Apicomplexa</taxon>
        <taxon>Aconoidasida</taxon>
        <taxon>Haemosporida</taxon>
        <taxon>Plasmodiidae</taxon>
        <taxon>Plasmodium</taxon>
        <taxon>Plasmodium (Laverania)</taxon>
    </lineage>
</organism>
<comment type="function">
    <text evidence="2 4">Structure-specific nuclease with 5'-flap endonuclease and 5'-3' exonuclease activities involved in DNA replication and repair. During DNA replication, cleaves the 5'-overhanging flap structure that is generated by displacement synthesis when DNA polymerase encounters the 5'-end of a downstream Okazaki fragment. It enters the flap from the 5'-end and then tracks to cleave the flap base, leaving a nick for ligation. Also involved in the long patch base excision repair (LP-BER) pathway, by cleaving within the apurinic/apyrimidinic (AP) site-terminated flap. Acts as a genome stabilization factor that prevents flaps from equilibrating into structures that lead to duplications and deletions. Also possesses 5'-3' exonuclease activity on nicked or gapped double-stranded DNA, and exhibits RNase H activity. Also involved in replication and repair of rDNA and in repairing mitochondrial DNA.</text>
</comment>
<comment type="cofactor">
    <cofactor evidence="2">
        <name>Mg(2+)</name>
        <dbReference type="ChEBI" id="CHEBI:18420"/>
    </cofactor>
    <text evidence="2">Binds 2 magnesium ions per subunit. They probably participate in the reaction catalyzed by the enzyme. May bind an additional third magnesium ion after substrate binding.</text>
</comment>
<comment type="activity regulation">
    <text evidence="4">Inhibited by monovalent metal ions.</text>
</comment>
<comment type="subunit">
    <text evidence="1 2">Interacts with PCNA1 and PCNA2 (By similarity). Three molecules of FEN1 bind to one PCNA trimer with each molecule binding to one PCNA monomer. PCNA stimulates the nuclease activity without altering cleavage specificity.</text>
</comment>
<comment type="subcellular location">
    <subcellularLocation>
        <location evidence="2">Nucleus</location>
        <location evidence="2">Nucleolus</location>
    </subcellularLocation>
    <subcellularLocation>
        <location evidence="2">Nucleus</location>
        <location evidence="2">Nucleoplasm</location>
    </subcellularLocation>
    <subcellularLocation>
        <location evidence="2">Mitochondrion</location>
    </subcellularLocation>
    <text evidence="2">Resides mostly in the nucleoli and relocalizes to the nucleoplasm upon DNA damage.</text>
</comment>
<comment type="developmental stage">
    <text evidence="4">Expressed in the ring, trophozoite and schizont stages.</text>
</comment>
<comment type="PTM">
    <text evidence="2">Phosphorylated. Phosphorylation upon DNA damage induces relocalization to the nuclear plasma.</text>
</comment>
<comment type="similarity">
    <text evidence="2">Belongs to the XPG/RAD2 endonuclease family. FEN1 subfamily.</text>
</comment>
<dbReference type="EC" id="3.1.-.-" evidence="2"/>
<dbReference type="EMBL" id="AF278764">
    <property type="protein sequence ID" value="AAG01445.1"/>
    <property type="molecule type" value="mRNA"/>
</dbReference>
<dbReference type="EMBL" id="AY429426">
    <property type="protein sequence ID" value="AAR01941.1"/>
    <property type="molecule type" value="Genomic_DNA"/>
</dbReference>
<dbReference type="SMR" id="Q9GZ01"/>
<dbReference type="VEuPathDB" id="PlasmoDB:PF3D7_0408500"/>
<dbReference type="VEuPathDB" id="PlasmoDB:Pf7G8-2_000101900"/>
<dbReference type="VEuPathDB" id="PlasmoDB:Pf7G8_040013700"/>
<dbReference type="VEuPathDB" id="PlasmoDB:PfCD01_040013500"/>
<dbReference type="VEuPathDB" id="PlasmoDB:PfDd2_040013800"/>
<dbReference type="VEuPathDB" id="PlasmoDB:PfGA01_040013400"/>
<dbReference type="VEuPathDB" id="PlasmoDB:PfGB4_040013900"/>
<dbReference type="VEuPathDB" id="PlasmoDB:PfGN01_040013800"/>
<dbReference type="VEuPathDB" id="PlasmoDB:PfHB3_040012600"/>
<dbReference type="VEuPathDB" id="PlasmoDB:PfIT_040013100"/>
<dbReference type="VEuPathDB" id="PlasmoDB:PfKE01_040015100"/>
<dbReference type="VEuPathDB" id="PlasmoDB:PfKH01_040013500"/>
<dbReference type="VEuPathDB" id="PlasmoDB:PfKH02_040013300"/>
<dbReference type="VEuPathDB" id="PlasmoDB:PfML01_040014300"/>
<dbReference type="VEuPathDB" id="PlasmoDB:PfNF135_040014300"/>
<dbReference type="VEuPathDB" id="PlasmoDB:PfNF166_040014900"/>
<dbReference type="VEuPathDB" id="PlasmoDB:PfNF54_040014100"/>
<dbReference type="VEuPathDB" id="PlasmoDB:PfSD01_070024000"/>
<dbReference type="VEuPathDB" id="PlasmoDB:PfSN01_040013500"/>
<dbReference type="VEuPathDB" id="PlasmoDB:PfTG01_040013800"/>
<dbReference type="BRENDA" id="3.1.16.1">
    <property type="organism ID" value="4889"/>
</dbReference>
<dbReference type="GO" id="GO:0005739">
    <property type="term" value="C:mitochondrion"/>
    <property type="evidence" value="ECO:0007669"/>
    <property type="project" value="UniProtKB-SubCell"/>
</dbReference>
<dbReference type="GO" id="GO:0005730">
    <property type="term" value="C:nucleolus"/>
    <property type="evidence" value="ECO:0007669"/>
    <property type="project" value="UniProtKB-SubCell"/>
</dbReference>
<dbReference type="GO" id="GO:0005654">
    <property type="term" value="C:nucleoplasm"/>
    <property type="evidence" value="ECO:0007669"/>
    <property type="project" value="UniProtKB-SubCell"/>
</dbReference>
<dbReference type="GO" id="GO:0008409">
    <property type="term" value="F:5'-3' exonuclease activity"/>
    <property type="evidence" value="ECO:0007669"/>
    <property type="project" value="UniProtKB-UniRule"/>
</dbReference>
<dbReference type="GO" id="GO:0017108">
    <property type="term" value="F:5'-flap endonuclease activity"/>
    <property type="evidence" value="ECO:0007669"/>
    <property type="project" value="UniProtKB-UniRule"/>
</dbReference>
<dbReference type="GO" id="GO:0003677">
    <property type="term" value="F:DNA binding"/>
    <property type="evidence" value="ECO:0007669"/>
    <property type="project" value="UniProtKB-UniRule"/>
</dbReference>
<dbReference type="GO" id="GO:0000287">
    <property type="term" value="F:magnesium ion binding"/>
    <property type="evidence" value="ECO:0007669"/>
    <property type="project" value="UniProtKB-UniRule"/>
</dbReference>
<dbReference type="GO" id="GO:0006284">
    <property type="term" value="P:base-excision repair"/>
    <property type="evidence" value="ECO:0007669"/>
    <property type="project" value="UniProtKB-UniRule"/>
</dbReference>
<dbReference type="GO" id="GO:0043137">
    <property type="term" value="P:DNA replication, removal of RNA primer"/>
    <property type="evidence" value="ECO:0007669"/>
    <property type="project" value="UniProtKB-UniRule"/>
</dbReference>
<dbReference type="CDD" id="cd09907">
    <property type="entry name" value="H3TH_FEN1-Euk"/>
    <property type="match status" value="1"/>
</dbReference>
<dbReference type="CDD" id="cd09867">
    <property type="entry name" value="PIN_FEN1"/>
    <property type="match status" value="1"/>
</dbReference>
<dbReference type="FunFam" id="1.10.150.20:FF:000009">
    <property type="entry name" value="Flap endonuclease 1"/>
    <property type="match status" value="1"/>
</dbReference>
<dbReference type="FunFam" id="3.40.50.1010:FF:000016">
    <property type="entry name" value="Flap endonuclease 1"/>
    <property type="match status" value="1"/>
</dbReference>
<dbReference type="Gene3D" id="1.10.150.20">
    <property type="entry name" value="5' to 3' exonuclease, C-terminal subdomain"/>
    <property type="match status" value="1"/>
</dbReference>
<dbReference type="Gene3D" id="3.40.50.1010">
    <property type="entry name" value="5'-nuclease"/>
    <property type="match status" value="1"/>
</dbReference>
<dbReference type="HAMAP" id="MF_00614">
    <property type="entry name" value="Fen"/>
    <property type="match status" value="1"/>
</dbReference>
<dbReference type="InterPro" id="IPR002421">
    <property type="entry name" value="5-3_exonuclease"/>
</dbReference>
<dbReference type="InterPro" id="IPR036279">
    <property type="entry name" value="5-3_exonuclease_C_sf"/>
</dbReference>
<dbReference type="InterPro" id="IPR023426">
    <property type="entry name" value="Flap_endonuc"/>
</dbReference>
<dbReference type="InterPro" id="IPR008918">
    <property type="entry name" value="HhH2"/>
</dbReference>
<dbReference type="InterPro" id="IPR029060">
    <property type="entry name" value="PIN-like_dom_sf"/>
</dbReference>
<dbReference type="InterPro" id="IPR006086">
    <property type="entry name" value="XPG-I_dom"/>
</dbReference>
<dbReference type="InterPro" id="IPR006084">
    <property type="entry name" value="XPG/Rad2"/>
</dbReference>
<dbReference type="InterPro" id="IPR019974">
    <property type="entry name" value="XPG_CS"/>
</dbReference>
<dbReference type="InterPro" id="IPR006085">
    <property type="entry name" value="XPG_DNA_repair_N"/>
</dbReference>
<dbReference type="PANTHER" id="PTHR11081:SF9">
    <property type="entry name" value="FLAP ENDONUCLEASE 1"/>
    <property type="match status" value="1"/>
</dbReference>
<dbReference type="PANTHER" id="PTHR11081">
    <property type="entry name" value="FLAP ENDONUCLEASE FAMILY MEMBER"/>
    <property type="match status" value="1"/>
</dbReference>
<dbReference type="Pfam" id="PF00867">
    <property type="entry name" value="XPG_I"/>
    <property type="match status" value="1"/>
</dbReference>
<dbReference type="Pfam" id="PF00752">
    <property type="entry name" value="XPG_N"/>
    <property type="match status" value="1"/>
</dbReference>
<dbReference type="PRINTS" id="PR00853">
    <property type="entry name" value="XPGRADSUPER"/>
</dbReference>
<dbReference type="SMART" id="SM00475">
    <property type="entry name" value="53EXOc"/>
    <property type="match status" value="1"/>
</dbReference>
<dbReference type="SMART" id="SM00279">
    <property type="entry name" value="HhH2"/>
    <property type="match status" value="1"/>
</dbReference>
<dbReference type="SMART" id="SM00484">
    <property type="entry name" value="XPGI"/>
    <property type="match status" value="1"/>
</dbReference>
<dbReference type="SMART" id="SM00485">
    <property type="entry name" value="XPGN"/>
    <property type="match status" value="1"/>
</dbReference>
<dbReference type="SUPFAM" id="SSF47807">
    <property type="entry name" value="5' to 3' exonuclease, C-terminal subdomain"/>
    <property type="match status" value="1"/>
</dbReference>
<dbReference type="SUPFAM" id="SSF88723">
    <property type="entry name" value="PIN domain-like"/>
    <property type="match status" value="1"/>
</dbReference>
<dbReference type="PROSITE" id="PS00841">
    <property type="entry name" value="XPG_1"/>
    <property type="match status" value="1"/>
</dbReference>
<accession>Q9GZ01</accession>
<accession>Q6T7E7</accession>
<reference key="1">
    <citation type="submission" date="2000-06" db="EMBL/GenBank/DDBJ databases">
        <authorList>
            <person name="Casta L.J."/>
            <person name="Schmutte C."/>
            <person name="Taraschi T.F."/>
        </authorList>
    </citation>
    <scope>NUCLEOTIDE SEQUENCE [MRNA]</scope>
    <source>
        <strain>FCR-3/C5</strain>
    </source>
</reference>
<reference key="2">
    <citation type="submission" date="2003-09" db="EMBL/GenBank/DDBJ databases">
        <title>Cloning of FEN-1 from Plasmodium falciparum HN/FCC-1.</title>
        <authorList>
            <person name="Wang P."/>
            <person name="Li M."/>
            <person name="Wu X."/>
        </authorList>
    </citation>
    <scope>NUCLEOTIDE SEQUENCE [GENOMIC DNA]</scope>
    <source>
        <strain>HN/FCC-1</strain>
    </source>
</reference>
<reference key="3">
    <citation type="journal article" date="2008" name="Mol. Biochem. Parasitol.">
        <title>Expression and biochemical characterization of the Plasmodium falciparum DNA repair enzyme, flap endonuclease-1 (PfFEN-1).</title>
        <authorList>
            <person name="Casta L.J."/>
            <person name="Buguliskis J.S."/>
            <person name="Matsumoto Y."/>
            <person name="Taraschi T.F."/>
        </authorList>
    </citation>
    <scope>FUNCTION</scope>
    <scope>ENDONUCLEASE AND EXONUCLEASE ACTIVITIES</scope>
    <scope>ACTIVITY REGULATION</scope>
    <scope>DEVELOPMENTAL STAGE</scope>
</reference>
<sequence>MGIKGLTKFIADAAPNAIKEIKIESLMGRIIAIDASMSLYQFIIAIRDSEQYGNLTNESGETTSHISGLMSRSIRLMENGLKPIYVFDGAPPELKGSELEKRGEKRQKAEELLKKAKEEGNLEEIKKQSGRTVRVTRKQNEEAKKLLTLMGIPIIEAPCEAESQCAFLTKYNLAHATATEDADALVFGTKILIRNLNANATSNQNKNKNNSKRGYILTEINLEQVLKGLNLTMDEFIDFCILCGCDYCDTIKGIGSKTAYNLIKEYNCIEKIIENIDQNKYQVPSNFRFQEARKSFINPNVLPKEDIKIDWNEPQIEELKHFLIKDYNFNELRVTNYINRLLKARKVTTQRRLDNFFTACTKKSTKLIVEETKKEQTLPARKGKKRPTAGDKNKQKAVKRKIEQANANGHHKMKEENKSVDNEKNEDGIKSVDNEKNEDGIKSVDDEKNLDDEKNLDDEKNKDDEKKSLDNFSSNLFDSDKESESGNIIKNEKQNMDDEKINDNLPSLFGDHSRIRHTENKDNISDINNNNNNNNNNSSSNNNNISNNHFNSVSSNSTFNSSTKLKSEDTLKSNSPLKEDSPNSYNNIKNNNHTININSQINNHKEPISNNNLNNINNSTEIKKKNTLFLLPFCPKDVTNVKKKKYTQRC</sequence>
<feature type="chain" id="PRO_0000403538" description="Flap endonuclease 1">
    <location>
        <begin position="1"/>
        <end position="650"/>
    </location>
</feature>
<feature type="region of interest" description="N-domain">
    <location>
        <begin position="1"/>
        <end position="106"/>
    </location>
</feature>
<feature type="region of interest" description="I-domain">
    <location>
        <begin position="124"/>
        <end position="266"/>
    </location>
</feature>
<feature type="region of interest" description="Interaction with PCNA" evidence="2">
    <location>
        <begin position="349"/>
        <end position="357"/>
    </location>
</feature>
<feature type="region of interest" description="Disordered" evidence="3">
    <location>
        <begin position="371"/>
        <end position="592"/>
    </location>
</feature>
<feature type="compositionally biased region" description="Basic and acidic residues" evidence="3">
    <location>
        <begin position="413"/>
        <end position="469"/>
    </location>
</feature>
<feature type="compositionally biased region" description="Basic and acidic residues" evidence="3">
    <location>
        <begin position="478"/>
        <end position="502"/>
    </location>
</feature>
<feature type="compositionally biased region" description="Basic and acidic residues" evidence="3">
    <location>
        <begin position="511"/>
        <end position="524"/>
    </location>
</feature>
<feature type="compositionally biased region" description="Low complexity" evidence="3">
    <location>
        <begin position="525"/>
        <end position="562"/>
    </location>
</feature>
<feature type="compositionally biased region" description="Basic and acidic residues" evidence="3">
    <location>
        <begin position="565"/>
        <end position="581"/>
    </location>
</feature>
<feature type="compositionally biased region" description="Low complexity" evidence="3">
    <location>
        <begin position="582"/>
        <end position="592"/>
    </location>
</feature>
<feature type="binding site" evidence="2">
    <location>
        <position position="34"/>
    </location>
    <ligand>
        <name>Mg(2+)</name>
        <dbReference type="ChEBI" id="CHEBI:18420"/>
        <label>1</label>
    </ligand>
</feature>
<feature type="binding site" evidence="2">
    <location>
        <position position="47"/>
    </location>
    <ligand>
        <name>DNA</name>
        <dbReference type="ChEBI" id="CHEBI:16991"/>
    </ligand>
</feature>
<feature type="binding site" evidence="2">
    <location>
        <position position="72"/>
    </location>
    <ligand>
        <name>DNA</name>
        <dbReference type="ChEBI" id="CHEBI:16991"/>
    </ligand>
</feature>
<feature type="binding site" evidence="2">
    <location>
        <position position="88"/>
    </location>
    <ligand>
        <name>Mg(2+)</name>
        <dbReference type="ChEBI" id="CHEBI:18420"/>
        <label>1</label>
    </ligand>
</feature>
<feature type="binding site" evidence="2">
    <location>
        <position position="160"/>
    </location>
    <ligand>
        <name>DNA</name>
        <dbReference type="ChEBI" id="CHEBI:16991"/>
    </ligand>
</feature>
<feature type="binding site" evidence="2">
    <location>
        <position position="160"/>
    </location>
    <ligand>
        <name>Mg(2+)</name>
        <dbReference type="ChEBI" id="CHEBI:18420"/>
        <label>1</label>
    </ligand>
</feature>
<feature type="binding site" evidence="2">
    <location>
        <position position="162"/>
    </location>
    <ligand>
        <name>Mg(2+)</name>
        <dbReference type="ChEBI" id="CHEBI:18420"/>
        <label>1</label>
    </ligand>
</feature>
<feature type="binding site" evidence="2">
    <location>
        <position position="181"/>
    </location>
    <ligand>
        <name>Mg(2+)</name>
        <dbReference type="ChEBI" id="CHEBI:18420"/>
        <label>2</label>
    </ligand>
</feature>
<feature type="binding site" evidence="2">
    <location>
        <position position="183"/>
    </location>
    <ligand>
        <name>Mg(2+)</name>
        <dbReference type="ChEBI" id="CHEBI:18420"/>
        <label>2</label>
    </ligand>
</feature>
<feature type="binding site" evidence="2">
    <location>
        <position position="244"/>
    </location>
    <ligand>
        <name>DNA</name>
        <dbReference type="ChEBI" id="CHEBI:16991"/>
    </ligand>
</feature>
<feature type="binding site" evidence="2">
    <location>
        <position position="246"/>
    </location>
    <ligand>
        <name>DNA</name>
        <dbReference type="ChEBI" id="CHEBI:16991"/>
    </ligand>
</feature>
<feature type="binding site" evidence="2">
    <location>
        <position position="246"/>
    </location>
    <ligand>
        <name>Mg(2+)</name>
        <dbReference type="ChEBI" id="CHEBI:18420"/>
        <label>2</label>
    </ligand>
</feature>
<feature type="sequence variant" description="In strain: HN/FCC-1.">
    <original>S</original>
    <variation>P</variation>
    <location>
        <position position="295"/>
    </location>
</feature>
<feature type="sequence variant" description="In strain: HN/FCC-1.">
    <original>T</original>
    <variation>P</variation>
    <location>
        <position position="388"/>
    </location>
</feature>
<feature type="sequence variant" description="In strain: HN/FCC-1.">
    <location>
        <begin position="536"/>
        <end position="537"/>
    </location>
</feature>
<protein>
    <recommendedName>
        <fullName evidence="2">Flap endonuclease 1</fullName>
        <shortName evidence="2">FEN-1</shortName>
        <ecNumber evidence="2">3.1.-.-</ecNumber>
    </recommendedName>
    <alternativeName>
        <fullName evidence="2">Flap structure-specific endonuclease 1</fullName>
    </alternativeName>
</protein>
<evidence type="ECO:0000250" key="1">
    <source>
        <dbReference type="UniProtKB" id="Q7K734"/>
    </source>
</evidence>
<evidence type="ECO:0000255" key="2">
    <source>
        <dbReference type="HAMAP-Rule" id="MF_03140"/>
    </source>
</evidence>
<evidence type="ECO:0000256" key="3">
    <source>
        <dbReference type="SAM" id="MobiDB-lite"/>
    </source>
</evidence>
<evidence type="ECO:0000269" key="4">
    <source>
    </source>
</evidence>